<proteinExistence type="inferred from homology"/>
<sequence>MLEQILATKREEVETLTLPAPLPERKRRPFAAALRRPRRMLGLIAEVKKASPSKGIIRPDFDPVAIAKAYERAGADAISVLTDERYFQGHRRYLRAVKEAVNVPVLRKDFIIDRRQVEESVRLGADAILLIGEALPPETLEELYHEAYSLGLECLVEVHAKETLERIFDRFTPEIVGINNRDLHTFVTTLEATKTLAPLIPPSCVIVSESGIGSFNDVKTVKSYGAQAMLVGESLMRQDDVERAVYRLFGEEDGDDSN</sequence>
<organism>
    <name type="scientific">Geobacillus kaustophilus (strain HTA426)</name>
    <dbReference type="NCBI Taxonomy" id="235909"/>
    <lineage>
        <taxon>Bacteria</taxon>
        <taxon>Bacillati</taxon>
        <taxon>Bacillota</taxon>
        <taxon>Bacilli</taxon>
        <taxon>Bacillales</taxon>
        <taxon>Anoxybacillaceae</taxon>
        <taxon>Geobacillus</taxon>
        <taxon>Geobacillus thermoleovorans group</taxon>
    </lineage>
</organism>
<gene>
    <name evidence="1" type="primary">trpC</name>
    <name type="ordered locus">GK2202</name>
</gene>
<reference key="1">
    <citation type="journal article" date="2004" name="Nucleic Acids Res.">
        <title>Thermoadaptation trait revealed by the genome sequence of thermophilic Geobacillus kaustophilus.</title>
        <authorList>
            <person name="Takami H."/>
            <person name="Takaki Y."/>
            <person name="Chee G.-J."/>
            <person name="Nishi S."/>
            <person name="Shimamura S."/>
            <person name="Suzuki H."/>
            <person name="Matsui S."/>
            <person name="Uchiyama I."/>
        </authorList>
    </citation>
    <scope>NUCLEOTIDE SEQUENCE [LARGE SCALE GENOMIC DNA]</scope>
    <source>
        <strain>HTA426</strain>
    </source>
</reference>
<accession>Q5KXU9</accession>
<comment type="catalytic activity">
    <reaction evidence="1">
        <text>1-(2-carboxyphenylamino)-1-deoxy-D-ribulose 5-phosphate + H(+) = (1S,2R)-1-C-(indol-3-yl)glycerol 3-phosphate + CO2 + H2O</text>
        <dbReference type="Rhea" id="RHEA:23476"/>
        <dbReference type="ChEBI" id="CHEBI:15377"/>
        <dbReference type="ChEBI" id="CHEBI:15378"/>
        <dbReference type="ChEBI" id="CHEBI:16526"/>
        <dbReference type="ChEBI" id="CHEBI:58613"/>
        <dbReference type="ChEBI" id="CHEBI:58866"/>
        <dbReference type="EC" id="4.1.1.48"/>
    </reaction>
</comment>
<comment type="pathway">
    <text evidence="1">Amino-acid biosynthesis; L-tryptophan biosynthesis; L-tryptophan from chorismate: step 4/5.</text>
</comment>
<comment type="similarity">
    <text evidence="1">Belongs to the TrpC family.</text>
</comment>
<dbReference type="EC" id="4.1.1.48" evidence="1"/>
<dbReference type="EMBL" id="BA000043">
    <property type="protein sequence ID" value="BAD76487.1"/>
    <property type="molecule type" value="Genomic_DNA"/>
</dbReference>
<dbReference type="RefSeq" id="WP_011231687.1">
    <property type="nucleotide sequence ID" value="NC_006510.1"/>
</dbReference>
<dbReference type="SMR" id="Q5KXU9"/>
<dbReference type="STRING" id="235909.GK2202"/>
<dbReference type="KEGG" id="gka:GK2202"/>
<dbReference type="PATRIC" id="fig|235909.7.peg.2357"/>
<dbReference type="eggNOG" id="COG0134">
    <property type="taxonomic scope" value="Bacteria"/>
</dbReference>
<dbReference type="HOGENOM" id="CLU_034247_2_0_9"/>
<dbReference type="UniPathway" id="UPA00035">
    <property type="reaction ID" value="UER00043"/>
</dbReference>
<dbReference type="Proteomes" id="UP000001172">
    <property type="component" value="Chromosome"/>
</dbReference>
<dbReference type="GO" id="GO:0004425">
    <property type="term" value="F:indole-3-glycerol-phosphate synthase activity"/>
    <property type="evidence" value="ECO:0007669"/>
    <property type="project" value="UniProtKB-UniRule"/>
</dbReference>
<dbReference type="GO" id="GO:0004640">
    <property type="term" value="F:phosphoribosylanthranilate isomerase activity"/>
    <property type="evidence" value="ECO:0007669"/>
    <property type="project" value="TreeGrafter"/>
</dbReference>
<dbReference type="GO" id="GO:0000162">
    <property type="term" value="P:L-tryptophan biosynthetic process"/>
    <property type="evidence" value="ECO:0007669"/>
    <property type="project" value="UniProtKB-UniRule"/>
</dbReference>
<dbReference type="CDD" id="cd00331">
    <property type="entry name" value="IGPS"/>
    <property type="match status" value="1"/>
</dbReference>
<dbReference type="FunFam" id="3.20.20.70:FF:000024">
    <property type="entry name" value="Indole-3-glycerol phosphate synthase"/>
    <property type="match status" value="1"/>
</dbReference>
<dbReference type="Gene3D" id="3.20.20.70">
    <property type="entry name" value="Aldolase class I"/>
    <property type="match status" value="1"/>
</dbReference>
<dbReference type="HAMAP" id="MF_00134_B">
    <property type="entry name" value="IGPS_B"/>
    <property type="match status" value="1"/>
</dbReference>
<dbReference type="InterPro" id="IPR013785">
    <property type="entry name" value="Aldolase_TIM"/>
</dbReference>
<dbReference type="InterPro" id="IPR045186">
    <property type="entry name" value="Indole-3-glycerol_P_synth"/>
</dbReference>
<dbReference type="InterPro" id="IPR013798">
    <property type="entry name" value="Indole-3-glycerol_P_synth_dom"/>
</dbReference>
<dbReference type="InterPro" id="IPR001468">
    <property type="entry name" value="Indole-3-GlycerolPSynthase_CS"/>
</dbReference>
<dbReference type="InterPro" id="IPR011060">
    <property type="entry name" value="RibuloseP-bd_barrel"/>
</dbReference>
<dbReference type="NCBIfam" id="NF001375">
    <property type="entry name" value="PRK00278.2-2"/>
    <property type="match status" value="1"/>
</dbReference>
<dbReference type="NCBIfam" id="NF001377">
    <property type="entry name" value="PRK00278.2-4"/>
    <property type="match status" value="1"/>
</dbReference>
<dbReference type="PANTHER" id="PTHR22854:SF2">
    <property type="entry name" value="INDOLE-3-GLYCEROL-PHOSPHATE SYNTHASE"/>
    <property type="match status" value="1"/>
</dbReference>
<dbReference type="PANTHER" id="PTHR22854">
    <property type="entry name" value="TRYPTOPHAN BIOSYNTHESIS PROTEIN"/>
    <property type="match status" value="1"/>
</dbReference>
<dbReference type="Pfam" id="PF00218">
    <property type="entry name" value="IGPS"/>
    <property type="match status" value="1"/>
</dbReference>
<dbReference type="SUPFAM" id="SSF51366">
    <property type="entry name" value="Ribulose-phoshate binding barrel"/>
    <property type="match status" value="1"/>
</dbReference>
<dbReference type="PROSITE" id="PS00614">
    <property type="entry name" value="IGPS"/>
    <property type="match status" value="1"/>
</dbReference>
<name>TRPC_GEOKA</name>
<evidence type="ECO:0000255" key="1">
    <source>
        <dbReference type="HAMAP-Rule" id="MF_00134"/>
    </source>
</evidence>
<protein>
    <recommendedName>
        <fullName evidence="1">Indole-3-glycerol phosphate synthase</fullName>
        <shortName evidence="1">IGPS</shortName>
        <ecNumber evidence="1">4.1.1.48</ecNumber>
    </recommendedName>
</protein>
<keyword id="KW-0028">Amino-acid biosynthesis</keyword>
<keyword id="KW-0057">Aromatic amino acid biosynthesis</keyword>
<keyword id="KW-0210">Decarboxylase</keyword>
<keyword id="KW-0456">Lyase</keyword>
<keyword id="KW-1185">Reference proteome</keyword>
<keyword id="KW-0822">Tryptophan biosynthesis</keyword>
<feature type="chain" id="PRO_1000018480" description="Indole-3-glycerol phosphate synthase">
    <location>
        <begin position="1"/>
        <end position="258"/>
    </location>
</feature>